<accession>P26952</accession>
<accession>B9VI80</accession>
<proteinExistence type="evidence at protein level"/>
<feature type="signal peptide" evidence="2">
    <location>
        <begin position="1"/>
        <end position="16"/>
    </location>
</feature>
<feature type="chain" id="PRO_0000010884" description="Interleukin-3 receptor subunit alpha">
    <location>
        <begin position="17"/>
        <end position="396"/>
    </location>
</feature>
<feature type="topological domain" description="Extracellular" evidence="2">
    <location>
        <begin position="17"/>
        <end position="331"/>
    </location>
</feature>
<feature type="transmembrane region" description="Helical" evidence="2">
    <location>
        <begin position="332"/>
        <end position="355"/>
    </location>
</feature>
<feature type="topological domain" description="Cytoplasmic" evidence="2">
    <location>
        <begin position="356"/>
        <end position="396"/>
    </location>
</feature>
<feature type="short sequence motif" description="WSXWS motif">
    <location>
        <begin position="312"/>
        <end position="316"/>
    </location>
</feature>
<feature type="short sequence motif" description="Box 1 motif">
    <location>
        <begin position="363"/>
        <end position="371"/>
    </location>
</feature>
<feature type="glycosylation site" description="N-linked (GlcNAc...) asparagine" evidence="2">
    <location>
        <position position="91"/>
    </location>
</feature>
<feature type="glycosylation site" description="N-linked (GlcNAc...) asparagine" evidence="2">
    <location>
        <position position="213"/>
    </location>
</feature>
<feature type="glycosylation site" description="N-linked (GlcNAc...) asparagine" evidence="2">
    <location>
        <position position="246"/>
    </location>
</feature>
<feature type="glycosylation site" description="N-linked (GlcNAc...) asparagine" evidence="2">
    <location>
        <position position="272"/>
    </location>
</feature>
<feature type="glycosylation site" description="N-linked (GlcNAc...) asparagine" evidence="2">
    <location>
        <position position="283"/>
    </location>
</feature>
<feature type="disulfide bond" evidence="1">
    <location>
        <begin position="62"/>
        <end position="79"/>
    </location>
</feature>
<feature type="disulfide bond" evidence="1">
    <location>
        <begin position="87"/>
        <end position="223"/>
    </location>
</feature>
<feature type="disulfide bond" evidence="1">
    <location>
        <begin position="125"/>
        <end position="134"/>
    </location>
</feature>
<feature type="disulfide bond" evidence="1">
    <location>
        <begin position="165"/>
        <end position="187"/>
    </location>
</feature>
<feature type="disulfide bond" evidence="1">
    <location>
        <begin position="245"/>
        <end position="323"/>
    </location>
</feature>
<feature type="cross-link" description="Glycyl lysine isopeptide (Lys-Gly) (interchain with G-Cter in ubiquitin)" evidence="5">
    <location>
        <position position="357"/>
    </location>
</feature>
<feature type="splice variant" id="VSP_040623" description="In isoform 2." evidence="6">
    <location>
        <begin position="20"/>
        <end position="112"/>
    </location>
</feature>
<feature type="splice variant" id="VSP_011265" description="In isoform 3." evidence="7">
    <location>
        <begin position="274"/>
        <end position="283"/>
    </location>
</feature>
<feature type="mutagenesis site" description="Resistant to degradation." evidence="5">
    <original>K</original>
    <variation>R</variation>
    <location>
        <position position="357"/>
    </location>
</feature>
<feature type="sequence conflict" description="In Ref. 2; no nucleotide entry." evidence="8" ref="2">
    <original>D</original>
    <variation>G</variation>
    <location>
        <position position="113"/>
    </location>
</feature>
<protein>
    <recommendedName>
        <fullName>Interleukin-3 receptor subunit alpha</fullName>
        <shortName>IL-3 receptor subunit alpha</shortName>
        <shortName>IL-3R subunit alpha</shortName>
        <shortName>IL-3R-alpha</shortName>
        <shortName>IL-3RA</shortName>
    </recommendedName>
    <alternativeName>
        <fullName>Interleukin-3 receptor class II alpha chain</fullName>
    </alternativeName>
    <cdAntigenName>CD123</cdAntigenName>
</protein>
<comment type="function">
    <text evidence="1 3 4 5">Cell surface receptor for IL3 expressed on hematopoietic progenitor cells, monocytes and B-lymphocytes that controls the production and differentiation of hematopoietic progenitor cells into lineage-restricted cells (By similarity). Ligand stimulation rapidly induces hetrodimerization with IL3RB, phosphorylation and enzyme activity of effector proteins such as JAK2 and PI3K that play a role in signaling cell proliferation and differentiation (PubMed:10477686, PubMed:31990690). Activation of JAK2 leads to STAT5-mediated transcriptional program (PubMed:10376805).</text>
</comment>
<comment type="subunit">
    <text evidence="1 4">Interacts with IL3. Heterodimer of an alpha and a beta subunit (PubMed:10477686). The beta subunit is common to the IL3, IL5 and GM-CSF receptors.</text>
</comment>
<comment type="subcellular location">
    <molecule>Isoform 1</molecule>
    <subcellularLocation>
        <location>Cell membrane</location>
        <topology>Single-pass type I membrane protein</topology>
    </subcellularLocation>
    <text>Expressed on the cell surface.</text>
</comment>
<comment type="subcellular location">
    <molecule>Isoform 2</molecule>
    <subcellularLocation>
        <location>Endomembrane system</location>
        <topology>Single-pass type I membrane protein</topology>
    </subcellularLocation>
    <text>Mostly distributed inside the cells, except in the nuclei and is not transported to the cell surface.</text>
</comment>
<comment type="alternative products">
    <event type="alternative splicing"/>
    <isoform>
        <id>P26952-1</id>
        <name>1</name>
        <name>B</name>
        <name>SP1</name>
        <sequence type="displayed"/>
    </isoform>
    <isoform>
        <id>P26952-3</id>
        <name>2</name>
        <name>SP2</name>
        <sequence type="described" ref="VSP_040623"/>
    </isoform>
    <isoform>
        <id>P26952-2</id>
        <name>3</name>
        <name>A</name>
        <sequence type="described" ref="VSP_011265"/>
    </isoform>
</comment>
<comment type="domain">
    <text>The WSXWS motif appears to be necessary for proper protein folding and thereby efficient intracellular transport and cell-surface receptor binding.</text>
</comment>
<comment type="domain">
    <text>The box 1 motif is required for JAK interaction and/or activation.</text>
</comment>
<comment type="PTM">
    <text evidence="1 5">Ubiquitinated at Lys-357 by RNFT2 in response to IL3. Ubiquitination leads ligand-induced degradation by the proteasome. Ubiquitinated by RNF128 via 'Lys-27'-linked polyubiquitination, facilitating its degradation through the lysosomal pathway (By similarity).</text>
</comment>
<comment type="similarity">
    <text evidence="8">Belongs to the type I cytokine receptor family. Type 5 subfamily.</text>
</comment>
<keyword id="KW-0025">Alternative splicing</keyword>
<keyword id="KW-1003">Cell membrane</keyword>
<keyword id="KW-1015">Disulfide bond</keyword>
<keyword id="KW-0325">Glycoprotein</keyword>
<keyword id="KW-1017">Isopeptide bond</keyword>
<keyword id="KW-0472">Membrane</keyword>
<keyword id="KW-0675">Receptor</keyword>
<keyword id="KW-1185">Reference proteome</keyword>
<keyword id="KW-0732">Signal</keyword>
<keyword id="KW-0812">Transmembrane</keyword>
<keyword id="KW-1133">Transmembrane helix</keyword>
<keyword id="KW-0832">Ubl conjugation</keyword>
<reference key="1">
    <citation type="journal article" date="1992" name="EMBO J.">
        <title>Two distinct functional high affinity receptors for mouse interleukin-3 (IL-3).</title>
        <authorList>
            <person name="Hara T."/>
            <person name="Miyajima A."/>
        </authorList>
    </citation>
    <scope>NUCLEOTIDE SEQUENCE [MRNA] (ISOFORM 1)</scope>
    <source>
        <strain>B6.S</strain>
    </source>
</reference>
<reference key="2">
    <citation type="journal article" date="1995" name="EMBO J.">
        <title>Impaired interleukin-3 (IL-3) response of the A/J mouse is caused by a branch point deletion in the IL-3 receptor alpha subunit gene.</title>
        <authorList>
            <person name="Ichihara M."/>
            <person name="Hara T."/>
            <person name="Takagi M."/>
            <person name="Cho L.C."/>
            <person name="Gorman D.M."/>
            <person name="Miyajima A."/>
        </authorList>
    </citation>
    <scope>NUCLEOTIDE SEQUENCE [MRNA] (ISOFORMS 1 AND 3)</scope>
    <scope>SUBCELLULAR LOCATION</scope>
    <source>
        <strain>A/J</strain>
        <strain>C57BL/6J</strain>
    </source>
</reference>
<reference key="3">
    <citation type="journal article" date="2009" name="J. Biol. Chem.">
        <title>A new isoform of IL-3 receptor alpha with novel differentiation activity and high affinity binding mode.</title>
        <authorList>
            <person name="Chen J."/>
            <person name="Olsen J."/>
            <person name="Ford S."/>
            <person name="Mirza S."/>
            <person name="Walker A."/>
            <person name="Murphy J.M."/>
            <person name="Young I.G."/>
        </authorList>
    </citation>
    <scope>NUCLEOTIDE SEQUENCE [MRNA] (ISOFORM 2)</scope>
    <scope>ALTERNATIVE SPLICING</scope>
</reference>
<reference key="4">
    <citation type="journal article" date="1999" name="Blood">
        <title>Heterodimerization of the alpha and beta chains of the interleukin-3 (IL-3) receptor is necessary and sufficient for IL-3-induced mitogenesis.</title>
        <authorList>
            <person name="Orban P.C."/>
            <person name="Levings M.K."/>
            <person name="Schrader J.W."/>
        </authorList>
    </citation>
    <scope>FUNCTION</scope>
    <scope>INTERACTION WITH IL3RB</scope>
</reference>
<reference key="5">
    <citation type="journal article" date="1999" name="Cell. Signal.">
        <title>Role of STAT5 in interferon-alpha signal transduction in Ba/F3 cells.</title>
        <authorList>
            <person name="Jaster R."/>
            <person name="Tschirch E."/>
            <person name="Bittorf T."/>
            <person name="Brock J."/>
        </authorList>
    </citation>
    <scope>FUNCTION IN STAT5 ACTIVATION</scope>
</reference>
<reference key="6">
    <citation type="journal article" date="2020" name="JCI Insight">
        <title>The RNFT2/IL-3Ralpha axis regulates IL-3 signaling and innate immunity.</title>
        <authorList>
            <person name="Tong Y."/>
            <person name="Lear T.B."/>
            <person name="Evankovich J."/>
            <person name="Chen Y."/>
            <person name="Londino J.D."/>
            <person name="Myerburg M.M."/>
            <person name="Zhang Y."/>
            <person name="Popescu I.D."/>
            <person name="McDyer J.F."/>
            <person name="McVerry B.J."/>
            <person name="Lockwood K.C."/>
            <person name="Jurczak M.J."/>
            <person name="Liu Y."/>
            <person name="Chen B.B."/>
        </authorList>
    </citation>
    <scope>UBIQUITINATION AT LYS-357</scope>
    <scope>MUTAGENESIS OF LYS-357</scope>
    <scope>FUNCTION</scope>
</reference>
<sequence>MAANLWLILGLLASHSSDLAAVREAPPTAVTTPIQNLHIDPAHYTLSWDPAPGADITTGAFCRKGRDIFVWADPGLARCSFQSLSLCHVTNFTVFLGKDRAVAGSIQFPPDDDGDHEAAAQDLRCWVHEGQLSCQWERGPKATGDVHYRMFWRDVRLGPAHNRECPHYHSLDVNTAGPAPHGGHEGCTLDLDTVLGSTPNSPDLVPQVTITVNGSGRAGPVPCMDNTVDLQRAEVLAPPTLTVECNGSEAHARWVARNRFHHGLLGYTLQVNQSSRSEPQEYNVSIPHFWVPNAGAISFRVKSRSEVYPRKLSSWSEAWGLVCPPEVMPVKTALVTSVATVLGAGLVAAGLLLWWRKSLLYRLCPPIPRLRLPLAGEMVVWEPALEDCEVTPVTDA</sequence>
<evidence type="ECO:0000250" key="1">
    <source>
        <dbReference type="UniProtKB" id="P26951"/>
    </source>
</evidence>
<evidence type="ECO:0000255" key="2"/>
<evidence type="ECO:0000269" key="3">
    <source>
    </source>
</evidence>
<evidence type="ECO:0000269" key="4">
    <source>
    </source>
</evidence>
<evidence type="ECO:0000269" key="5">
    <source>
    </source>
</evidence>
<evidence type="ECO:0000303" key="6">
    <source>
    </source>
</evidence>
<evidence type="ECO:0000303" key="7">
    <source>
    </source>
</evidence>
<evidence type="ECO:0000305" key="8"/>
<dbReference type="EMBL" id="X64534">
    <property type="protein sequence ID" value="CAA45833.1"/>
    <property type="molecule type" value="mRNA"/>
</dbReference>
<dbReference type="EMBL" id="FJ550346">
    <property type="protein sequence ID" value="ACM24115.1"/>
    <property type="molecule type" value="mRNA"/>
</dbReference>
<dbReference type="CCDS" id="CCDS26827.1">
    <molecule id="P26952-1"/>
</dbReference>
<dbReference type="PIR" id="S22909">
    <property type="entry name" value="S22909"/>
</dbReference>
<dbReference type="RefSeq" id="NP_001405365.1">
    <molecule id="P26952-1"/>
    <property type="nucleotide sequence ID" value="NM_001418436.1"/>
</dbReference>
<dbReference type="RefSeq" id="NP_001405366.1">
    <molecule id="P26952-1"/>
    <property type="nucleotide sequence ID" value="NM_001418437.1"/>
</dbReference>
<dbReference type="RefSeq" id="NP_001405369.1">
    <molecule id="P26952-2"/>
    <property type="nucleotide sequence ID" value="NM_001418440.1"/>
</dbReference>
<dbReference type="RefSeq" id="NP_001405371.1">
    <molecule id="P26952-2"/>
    <property type="nucleotide sequence ID" value="NM_001418442.1"/>
</dbReference>
<dbReference type="RefSeq" id="NP_001405381.1">
    <molecule id="P26952-3"/>
    <property type="nucleotide sequence ID" value="NM_001418452.1"/>
</dbReference>
<dbReference type="RefSeq" id="NP_001405382.1">
    <molecule id="P26952-3"/>
    <property type="nucleotide sequence ID" value="NM_001418453.1"/>
</dbReference>
<dbReference type="RefSeq" id="NP_001405383.1">
    <molecule id="P26952-3"/>
    <property type="nucleotide sequence ID" value="NM_001418454.1"/>
</dbReference>
<dbReference type="RefSeq" id="NP_032395.1">
    <molecule id="P26952-1"/>
    <property type="nucleotide sequence ID" value="NM_008369.2"/>
</dbReference>
<dbReference type="SMR" id="P26952"/>
<dbReference type="BioGRID" id="200636">
    <property type="interactions" value="3"/>
</dbReference>
<dbReference type="DIP" id="DIP-59621N"/>
<dbReference type="FunCoup" id="P26952">
    <property type="interactions" value="650"/>
</dbReference>
<dbReference type="IntAct" id="P26952">
    <property type="interactions" value="1"/>
</dbReference>
<dbReference type="STRING" id="10090.ENSMUSP00000153358"/>
<dbReference type="GlyCosmos" id="P26952">
    <property type="glycosylation" value="5 sites, No reported glycans"/>
</dbReference>
<dbReference type="GlyGen" id="P26952">
    <property type="glycosylation" value="5 sites"/>
</dbReference>
<dbReference type="iPTMnet" id="P26952"/>
<dbReference type="PhosphoSitePlus" id="P26952"/>
<dbReference type="SwissPalm" id="P26952"/>
<dbReference type="PaxDb" id="10090-ENSMUSP00000088079"/>
<dbReference type="ProteomicsDB" id="301647">
    <molecule id="P26952-1"/>
</dbReference>
<dbReference type="ProteomicsDB" id="301648">
    <molecule id="P26952-3"/>
</dbReference>
<dbReference type="ProteomicsDB" id="301649">
    <molecule id="P26952-2"/>
</dbReference>
<dbReference type="DNASU" id="16188"/>
<dbReference type="Ensembl" id="ENSMUST00000090591.4">
    <molecule id="P26952-1"/>
    <property type="protein sequence ID" value="ENSMUSP00000088079.3"/>
    <property type="gene ID" value="ENSMUSG00000068758.9"/>
</dbReference>
<dbReference type="Ensembl" id="ENSMUST00000224163.2">
    <molecule id="P26952-1"/>
    <property type="protein sequence ID" value="ENSMUSP00000153358.2"/>
    <property type="gene ID" value="ENSMUSG00000068758.9"/>
</dbReference>
<dbReference type="Ensembl" id="ENSMUST00000224877.2">
    <molecule id="P26952-3"/>
    <property type="protein sequence ID" value="ENSMUSP00000153086.2"/>
    <property type="gene ID" value="ENSMUSG00000068758.9"/>
</dbReference>
<dbReference type="GeneID" id="16188"/>
<dbReference type="KEGG" id="mmu:16188"/>
<dbReference type="UCSC" id="uc007sgm.1">
    <molecule id="P26952-1"/>
    <property type="organism name" value="mouse"/>
</dbReference>
<dbReference type="UCSC" id="uc011zgb.1">
    <molecule id="P26952-3"/>
    <property type="organism name" value="mouse"/>
</dbReference>
<dbReference type="AGR" id="MGI:96553"/>
<dbReference type="CTD" id="3563"/>
<dbReference type="MGI" id="MGI:96553">
    <property type="gene designation" value="Il3ra"/>
</dbReference>
<dbReference type="VEuPathDB" id="HostDB:ENSMUSG00000068758"/>
<dbReference type="eggNOG" id="ENOG502RZVR">
    <property type="taxonomic scope" value="Eukaryota"/>
</dbReference>
<dbReference type="GeneTree" id="ENSGT00940000171119"/>
<dbReference type="HOGENOM" id="CLU_039627_1_0_1"/>
<dbReference type="InParanoid" id="P26952"/>
<dbReference type="OMA" id="CNENDSF"/>
<dbReference type="OrthoDB" id="9835959at2759"/>
<dbReference type="PhylomeDB" id="P26952"/>
<dbReference type="TreeFam" id="TF331549"/>
<dbReference type="BioGRID-ORCS" id="16188">
    <property type="hits" value="5 hits in 80 CRISPR screens"/>
</dbReference>
<dbReference type="ChiTaRS" id="Slc13a4">
    <property type="organism name" value="mouse"/>
</dbReference>
<dbReference type="PRO" id="PR:P26952"/>
<dbReference type="Proteomes" id="UP000000589">
    <property type="component" value="Chromosome 14"/>
</dbReference>
<dbReference type="RNAct" id="P26952">
    <property type="molecule type" value="protein"/>
</dbReference>
<dbReference type="Bgee" id="ENSMUSG00000068758">
    <property type="expression patterns" value="Expressed in granulocyte and 89 other cell types or tissues"/>
</dbReference>
<dbReference type="ExpressionAtlas" id="P26952">
    <property type="expression patterns" value="baseline and differential"/>
</dbReference>
<dbReference type="GO" id="GO:0012505">
    <property type="term" value="C:endomembrane system"/>
    <property type="evidence" value="ECO:0007669"/>
    <property type="project" value="UniProtKB-SubCell"/>
</dbReference>
<dbReference type="GO" id="GO:0016020">
    <property type="term" value="C:membrane"/>
    <property type="evidence" value="ECO:0000314"/>
    <property type="project" value="MGI"/>
</dbReference>
<dbReference type="GO" id="GO:0005886">
    <property type="term" value="C:plasma membrane"/>
    <property type="evidence" value="ECO:0007669"/>
    <property type="project" value="UniProtKB-SubCell"/>
</dbReference>
<dbReference type="GO" id="GO:0004896">
    <property type="term" value="F:cytokine receptor activity"/>
    <property type="evidence" value="ECO:0007669"/>
    <property type="project" value="InterPro"/>
</dbReference>
<dbReference type="GO" id="GO:0019978">
    <property type="term" value="F:interleukin-3 binding"/>
    <property type="evidence" value="ECO:0000353"/>
    <property type="project" value="MGI"/>
</dbReference>
<dbReference type="GO" id="GO:0004912">
    <property type="term" value="F:interleukin-3 receptor activity"/>
    <property type="evidence" value="ECO:0000314"/>
    <property type="project" value="MGI"/>
</dbReference>
<dbReference type="GO" id="GO:0019221">
    <property type="term" value="P:cytokine-mediated signaling pathway"/>
    <property type="evidence" value="ECO:0000314"/>
    <property type="project" value="MGI"/>
</dbReference>
<dbReference type="GO" id="GO:0038156">
    <property type="term" value="P:interleukin-3-mediated signaling pathway"/>
    <property type="evidence" value="ECO:0000314"/>
    <property type="project" value="MGI"/>
</dbReference>
<dbReference type="GO" id="GO:0030224">
    <property type="term" value="P:monocyte differentiation"/>
    <property type="evidence" value="ECO:0000316"/>
    <property type="project" value="MGI"/>
</dbReference>
<dbReference type="GO" id="GO:0001558">
    <property type="term" value="P:regulation of cell growth"/>
    <property type="evidence" value="ECO:0000316"/>
    <property type="project" value="MGI"/>
</dbReference>
<dbReference type="FunFam" id="2.60.40.10:FF:002832">
    <property type="entry name" value="Interleukin-3 receptor subunit alpha"/>
    <property type="match status" value="1"/>
</dbReference>
<dbReference type="Gene3D" id="2.60.40.3850">
    <property type="match status" value="1"/>
</dbReference>
<dbReference type="Gene3D" id="2.60.40.10">
    <property type="entry name" value="Immunoglobulins"/>
    <property type="match status" value="2"/>
</dbReference>
<dbReference type="InterPro" id="IPR036116">
    <property type="entry name" value="FN3_sf"/>
</dbReference>
<dbReference type="InterPro" id="IPR013783">
    <property type="entry name" value="Ig-like_fold"/>
</dbReference>
<dbReference type="InterPro" id="IPR003532">
    <property type="entry name" value="Short_hematopoietin_rcpt_2_CS"/>
</dbReference>
<dbReference type="InterPro" id="IPR015321">
    <property type="entry name" value="TypeI_recpt_CBD"/>
</dbReference>
<dbReference type="Pfam" id="PF09240">
    <property type="entry name" value="IL6Ra-bind"/>
    <property type="match status" value="1"/>
</dbReference>
<dbReference type="SUPFAM" id="SSF49265">
    <property type="entry name" value="Fibronectin type III"/>
    <property type="match status" value="1"/>
</dbReference>
<dbReference type="PROSITE" id="PS01356">
    <property type="entry name" value="HEMATOPO_REC_S_F2"/>
    <property type="match status" value="1"/>
</dbReference>
<organism>
    <name type="scientific">Mus musculus</name>
    <name type="common">Mouse</name>
    <dbReference type="NCBI Taxonomy" id="10090"/>
    <lineage>
        <taxon>Eukaryota</taxon>
        <taxon>Metazoa</taxon>
        <taxon>Chordata</taxon>
        <taxon>Craniata</taxon>
        <taxon>Vertebrata</taxon>
        <taxon>Euteleostomi</taxon>
        <taxon>Mammalia</taxon>
        <taxon>Eutheria</taxon>
        <taxon>Euarchontoglires</taxon>
        <taxon>Glires</taxon>
        <taxon>Rodentia</taxon>
        <taxon>Myomorpha</taxon>
        <taxon>Muroidea</taxon>
        <taxon>Muridae</taxon>
        <taxon>Murinae</taxon>
        <taxon>Mus</taxon>
        <taxon>Mus</taxon>
    </lineage>
</organism>
<gene>
    <name type="primary">Il3ra</name>
    <name type="synonym">Sut-1</name>
</gene>
<name>IL3RA_MOUSE</name>